<feature type="chain" id="PRO_0000365914" description="ATP synthase subunit c">
    <location>
        <begin position="1"/>
        <end position="81"/>
    </location>
</feature>
<feature type="transmembrane region" description="Helical" evidence="1">
    <location>
        <begin position="7"/>
        <end position="27"/>
    </location>
</feature>
<feature type="transmembrane region" description="Helical" evidence="1">
    <location>
        <begin position="57"/>
        <end position="77"/>
    </location>
</feature>
<feature type="site" description="Reversibly protonated during proton transport" evidence="1">
    <location>
        <position position="61"/>
    </location>
</feature>
<gene>
    <name evidence="1" type="primary">atpE</name>
    <name evidence="1" type="synonym">atpH</name>
    <name type="ordered locus">P9301_16451</name>
</gene>
<keyword id="KW-0066">ATP synthesis</keyword>
<keyword id="KW-0138">CF(0)</keyword>
<keyword id="KW-0375">Hydrogen ion transport</keyword>
<keyword id="KW-0406">Ion transport</keyword>
<keyword id="KW-0446">Lipid-binding</keyword>
<keyword id="KW-0472">Membrane</keyword>
<keyword id="KW-1185">Reference proteome</keyword>
<keyword id="KW-0793">Thylakoid</keyword>
<keyword id="KW-0812">Transmembrane</keyword>
<keyword id="KW-1133">Transmembrane helix</keyword>
<keyword id="KW-0813">Transport</keyword>
<dbReference type="EMBL" id="CP000576">
    <property type="protein sequence ID" value="ABO18268.1"/>
    <property type="molecule type" value="Genomic_DNA"/>
</dbReference>
<dbReference type="RefSeq" id="WP_002805169.1">
    <property type="nucleotide sequence ID" value="NC_009091.1"/>
</dbReference>
<dbReference type="SMR" id="A3PEU3"/>
<dbReference type="STRING" id="167546.P9301_16451"/>
<dbReference type="GeneID" id="60201071"/>
<dbReference type="KEGG" id="pmg:P9301_16451"/>
<dbReference type="eggNOG" id="COG0636">
    <property type="taxonomic scope" value="Bacteria"/>
</dbReference>
<dbReference type="HOGENOM" id="CLU_148047_2_0_3"/>
<dbReference type="OrthoDB" id="9810379at2"/>
<dbReference type="Proteomes" id="UP000001430">
    <property type="component" value="Chromosome"/>
</dbReference>
<dbReference type="GO" id="GO:0031676">
    <property type="term" value="C:plasma membrane-derived thylakoid membrane"/>
    <property type="evidence" value="ECO:0007669"/>
    <property type="project" value="UniProtKB-SubCell"/>
</dbReference>
<dbReference type="GO" id="GO:0045259">
    <property type="term" value="C:proton-transporting ATP synthase complex"/>
    <property type="evidence" value="ECO:0007669"/>
    <property type="project" value="UniProtKB-KW"/>
</dbReference>
<dbReference type="GO" id="GO:0033177">
    <property type="term" value="C:proton-transporting two-sector ATPase complex, proton-transporting domain"/>
    <property type="evidence" value="ECO:0007669"/>
    <property type="project" value="InterPro"/>
</dbReference>
<dbReference type="GO" id="GO:0008289">
    <property type="term" value="F:lipid binding"/>
    <property type="evidence" value="ECO:0007669"/>
    <property type="project" value="UniProtKB-KW"/>
</dbReference>
<dbReference type="GO" id="GO:0046933">
    <property type="term" value="F:proton-transporting ATP synthase activity, rotational mechanism"/>
    <property type="evidence" value="ECO:0007669"/>
    <property type="project" value="UniProtKB-UniRule"/>
</dbReference>
<dbReference type="CDD" id="cd18183">
    <property type="entry name" value="ATP-synt_Fo_c_ATPH"/>
    <property type="match status" value="1"/>
</dbReference>
<dbReference type="FunFam" id="1.20.20.10:FF:000001">
    <property type="entry name" value="ATP synthase subunit c, chloroplastic"/>
    <property type="match status" value="1"/>
</dbReference>
<dbReference type="Gene3D" id="1.20.20.10">
    <property type="entry name" value="F1F0 ATP synthase subunit C"/>
    <property type="match status" value="1"/>
</dbReference>
<dbReference type="HAMAP" id="MF_01396">
    <property type="entry name" value="ATP_synth_c_bact"/>
    <property type="match status" value="1"/>
</dbReference>
<dbReference type="InterPro" id="IPR005953">
    <property type="entry name" value="ATP_synth_csu_bac/chlpt"/>
</dbReference>
<dbReference type="InterPro" id="IPR000454">
    <property type="entry name" value="ATP_synth_F0_csu"/>
</dbReference>
<dbReference type="InterPro" id="IPR020537">
    <property type="entry name" value="ATP_synth_F0_csu_DDCD_BS"/>
</dbReference>
<dbReference type="InterPro" id="IPR038662">
    <property type="entry name" value="ATP_synth_F0_csu_sf"/>
</dbReference>
<dbReference type="InterPro" id="IPR002379">
    <property type="entry name" value="ATPase_proteolipid_c-like_dom"/>
</dbReference>
<dbReference type="InterPro" id="IPR035921">
    <property type="entry name" value="F/V-ATP_Csub_sf"/>
</dbReference>
<dbReference type="NCBIfam" id="TIGR01260">
    <property type="entry name" value="ATP_synt_c"/>
    <property type="match status" value="1"/>
</dbReference>
<dbReference type="NCBIfam" id="NF005608">
    <property type="entry name" value="PRK07354.1"/>
    <property type="match status" value="1"/>
</dbReference>
<dbReference type="PANTHER" id="PTHR10031">
    <property type="entry name" value="ATP SYNTHASE LIPID-BINDING PROTEIN, MITOCHONDRIAL"/>
    <property type="match status" value="1"/>
</dbReference>
<dbReference type="PANTHER" id="PTHR10031:SF0">
    <property type="entry name" value="ATPASE PROTEIN 9"/>
    <property type="match status" value="1"/>
</dbReference>
<dbReference type="Pfam" id="PF00137">
    <property type="entry name" value="ATP-synt_C"/>
    <property type="match status" value="1"/>
</dbReference>
<dbReference type="PRINTS" id="PR00124">
    <property type="entry name" value="ATPASEC"/>
</dbReference>
<dbReference type="SUPFAM" id="SSF81333">
    <property type="entry name" value="F1F0 ATP synthase subunit C"/>
    <property type="match status" value="1"/>
</dbReference>
<dbReference type="PROSITE" id="PS00605">
    <property type="entry name" value="ATPASE_C"/>
    <property type="match status" value="1"/>
</dbReference>
<sequence>MDSITSAASVVAAGLAVGLGAIGPGLGQGNAAQGAVEGIARQPEAEGKIRGTLLLSFAFMESLTIYGLVVALVLLFANPFS</sequence>
<organism>
    <name type="scientific">Prochlorococcus marinus (strain MIT 9301)</name>
    <dbReference type="NCBI Taxonomy" id="167546"/>
    <lineage>
        <taxon>Bacteria</taxon>
        <taxon>Bacillati</taxon>
        <taxon>Cyanobacteriota</taxon>
        <taxon>Cyanophyceae</taxon>
        <taxon>Synechococcales</taxon>
        <taxon>Prochlorococcaceae</taxon>
        <taxon>Prochlorococcus</taxon>
    </lineage>
</organism>
<evidence type="ECO:0000255" key="1">
    <source>
        <dbReference type="HAMAP-Rule" id="MF_01396"/>
    </source>
</evidence>
<accession>A3PEU3</accession>
<name>ATPL_PROM0</name>
<proteinExistence type="inferred from homology"/>
<protein>
    <recommendedName>
        <fullName evidence="1">ATP synthase subunit c</fullName>
    </recommendedName>
    <alternativeName>
        <fullName evidence="1">ATP synthase F(0) sector subunit c</fullName>
    </alternativeName>
    <alternativeName>
        <fullName evidence="1">F-type ATPase subunit c</fullName>
        <shortName evidence="1">F-ATPase subunit c</shortName>
    </alternativeName>
    <alternativeName>
        <fullName evidence="1">Lipid-binding protein</fullName>
    </alternativeName>
</protein>
<reference key="1">
    <citation type="journal article" date="2007" name="PLoS Genet.">
        <title>Patterns and implications of gene gain and loss in the evolution of Prochlorococcus.</title>
        <authorList>
            <person name="Kettler G.C."/>
            <person name="Martiny A.C."/>
            <person name="Huang K."/>
            <person name="Zucker J."/>
            <person name="Coleman M.L."/>
            <person name="Rodrigue S."/>
            <person name="Chen F."/>
            <person name="Lapidus A."/>
            <person name="Ferriera S."/>
            <person name="Johnson J."/>
            <person name="Steglich C."/>
            <person name="Church G.M."/>
            <person name="Richardson P."/>
            <person name="Chisholm S.W."/>
        </authorList>
    </citation>
    <scope>NUCLEOTIDE SEQUENCE [LARGE SCALE GENOMIC DNA]</scope>
    <source>
        <strain>MIT 9301</strain>
    </source>
</reference>
<comment type="function">
    <text evidence="1">F(1)F(0) ATP synthase produces ATP from ADP in the presence of a proton or sodium gradient. F-type ATPases consist of two structural domains, F(1) containing the extramembraneous catalytic core and F(0) containing the membrane proton channel, linked together by a central stalk and a peripheral stalk. During catalysis, ATP synthesis in the catalytic domain of F(1) is coupled via a rotary mechanism of the central stalk subunits to proton translocation.</text>
</comment>
<comment type="function">
    <text evidence="1">Key component of the F(0) channel; it plays a direct role in translocation across the membrane. A homomeric c-ring of between 10-14 subunits forms the central stalk rotor element with the F(1) delta and epsilon subunits.</text>
</comment>
<comment type="subunit">
    <text evidence="1">F-type ATPases have 2 components, F(1) - the catalytic core - and F(0) - the membrane proton channel. F(1) has five subunits: alpha(3), beta(3), gamma(1), delta(1), epsilon(1). F(0) has four main subunits: a(1), b(1), b'(1) and c(10-14). The alpha and beta chains form an alternating ring which encloses part of the gamma chain. F(1) is attached to F(0) by a central stalk formed by the gamma and epsilon chains, while a peripheral stalk is formed by the delta, b and b' chains.</text>
</comment>
<comment type="subcellular location">
    <subcellularLocation>
        <location evidence="1">Cellular thylakoid membrane</location>
        <topology evidence="1">Multi-pass membrane protein</topology>
    </subcellularLocation>
</comment>
<comment type="similarity">
    <text evidence="1">Belongs to the ATPase C chain family.</text>
</comment>